<gene>
    <name type="primary">HEMA2</name>
</gene>
<evidence type="ECO:0000250" key="1"/>
<evidence type="ECO:0000305" key="2"/>
<keyword id="KW-0149">Chlorophyll biosynthesis</keyword>
<keyword id="KW-0150">Chloroplast</keyword>
<keyword id="KW-0521">NADP</keyword>
<keyword id="KW-0560">Oxidoreductase</keyword>
<keyword id="KW-0934">Plastid</keyword>
<keyword id="KW-0627">Porphyrin biosynthesis</keyword>
<protein>
    <recommendedName>
        <fullName>Glutamyl-tRNA reductase 2</fullName>
        <shortName>GluTR</shortName>
        <ecNumber>1.2.1.70</ecNumber>
    </recommendedName>
</protein>
<organism>
    <name type="scientific">Hordeum vulgare</name>
    <name type="common">Barley</name>
    <dbReference type="NCBI Taxonomy" id="4513"/>
    <lineage>
        <taxon>Eukaryota</taxon>
        <taxon>Viridiplantae</taxon>
        <taxon>Streptophyta</taxon>
        <taxon>Embryophyta</taxon>
        <taxon>Tracheophyta</taxon>
        <taxon>Spermatophyta</taxon>
        <taxon>Magnoliopsida</taxon>
        <taxon>Liliopsida</taxon>
        <taxon>Poales</taxon>
        <taxon>Poaceae</taxon>
        <taxon>BOP clade</taxon>
        <taxon>Pooideae</taxon>
        <taxon>Triticodae</taxon>
        <taxon>Triticeae</taxon>
        <taxon>Hordeinae</taxon>
        <taxon>Hordeum</taxon>
    </lineage>
</organism>
<comment type="function">
    <text evidence="1">Catalyzes the NADPH-dependent reduction of glutamyl-tRNA(Glu) to glutamate 1-semialdehyde (GSA).</text>
</comment>
<comment type="catalytic activity">
    <reaction>
        <text>(S)-4-amino-5-oxopentanoate + tRNA(Glu) + NADP(+) = L-glutamyl-tRNA(Glu) + NADPH + H(+)</text>
        <dbReference type="Rhea" id="RHEA:12344"/>
        <dbReference type="Rhea" id="RHEA-COMP:9663"/>
        <dbReference type="Rhea" id="RHEA-COMP:9680"/>
        <dbReference type="ChEBI" id="CHEBI:15378"/>
        <dbReference type="ChEBI" id="CHEBI:57501"/>
        <dbReference type="ChEBI" id="CHEBI:57783"/>
        <dbReference type="ChEBI" id="CHEBI:58349"/>
        <dbReference type="ChEBI" id="CHEBI:78442"/>
        <dbReference type="ChEBI" id="CHEBI:78520"/>
        <dbReference type="EC" id="1.2.1.70"/>
    </reaction>
</comment>
<comment type="pathway">
    <text>Porphyrin-containing compound metabolism; protoporphyrin-IX biosynthesis; 5-aminolevulinate from L-glutamyl-tRNA(Glu): step 1/2.</text>
</comment>
<comment type="subcellular location">
    <subcellularLocation>
        <location>Plastid</location>
        <location>Chloroplast</location>
    </subcellularLocation>
</comment>
<comment type="miscellaneous">
    <text evidence="1">During catalysis, the active site Cys acts as a nucleophile attacking the alpha-carbonyl group of tRNA-bound glutamate with the formation of a thioester intermediate between enzyme and glutamate, and the concomitant release of tRNA(Glu). The thioester intermediate is finally reduced by direct hydride transfer from NADPH, to form the product GSA (By similarity).</text>
</comment>
<comment type="similarity">
    <text evidence="2">Belongs to the glutamyl-tRNA reductase family.</text>
</comment>
<accession>Q96563</accession>
<dbReference type="EC" id="1.2.1.70"/>
<dbReference type="EMBL" id="X86102">
    <property type="protein sequence ID" value="CAA60055.1"/>
    <property type="molecule type" value="mRNA"/>
</dbReference>
<dbReference type="PIR" id="T05734">
    <property type="entry name" value="T05734"/>
</dbReference>
<dbReference type="SMR" id="Q96563"/>
<dbReference type="UniPathway" id="UPA00251">
    <property type="reaction ID" value="UER00316"/>
</dbReference>
<dbReference type="ExpressionAtlas" id="Q96563">
    <property type="expression patterns" value="differential"/>
</dbReference>
<dbReference type="GO" id="GO:0009507">
    <property type="term" value="C:chloroplast"/>
    <property type="evidence" value="ECO:0007669"/>
    <property type="project" value="UniProtKB-SubCell"/>
</dbReference>
<dbReference type="GO" id="GO:0008883">
    <property type="term" value="F:glutamyl-tRNA reductase activity"/>
    <property type="evidence" value="ECO:0007669"/>
    <property type="project" value="UniProtKB-EC"/>
</dbReference>
<dbReference type="GO" id="GO:0050661">
    <property type="term" value="F:NADP binding"/>
    <property type="evidence" value="ECO:0007669"/>
    <property type="project" value="InterPro"/>
</dbReference>
<dbReference type="GO" id="GO:0015995">
    <property type="term" value="P:chlorophyll biosynthetic process"/>
    <property type="evidence" value="ECO:0007669"/>
    <property type="project" value="UniProtKB-KW"/>
</dbReference>
<dbReference type="GO" id="GO:0006782">
    <property type="term" value="P:protoporphyrinogen IX biosynthetic process"/>
    <property type="evidence" value="ECO:0007669"/>
    <property type="project" value="UniProtKB-UniPathway"/>
</dbReference>
<dbReference type="CDD" id="cd05213">
    <property type="entry name" value="NAD_bind_Glutamyl_tRNA_reduct"/>
    <property type="match status" value="1"/>
</dbReference>
<dbReference type="FunFam" id="3.30.460.30:FF:000001">
    <property type="entry name" value="Glutamyl-tRNA reductase"/>
    <property type="match status" value="1"/>
</dbReference>
<dbReference type="FunFam" id="3.40.50.720:FF:000031">
    <property type="entry name" value="Glutamyl-tRNA reductase"/>
    <property type="match status" value="1"/>
</dbReference>
<dbReference type="Gene3D" id="3.30.460.30">
    <property type="entry name" value="Glutamyl-tRNA reductase, N-terminal domain"/>
    <property type="match status" value="1"/>
</dbReference>
<dbReference type="Gene3D" id="3.40.50.720">
    <property type="entry name" value="NAD(P)-binding Rossmann-like Domain"/>
    <property type="match status" value="1"/>
</dbReference>
<dbReference type="HAMAP" id="MF_00087">
    <property type="entry name" value="Glu_tRNA_reductase"/>
    <property type="match status" value="1"/>
</dbReference>
<dbReference type="InterPro" id="IPR000343">
    <property type="entry name" value="4pyrrol_synth_GluRdtase"/>
</dbReference>
<dbReference type="InterPro" id="IPR015896">
    <property type="entry name" value="4pyrrol_synth_GluRdtase_dimer"/>
</dbReference>
<dbReference type="InterPro" id="IPR015895">
    <property type="entry name" value="4pyrrol_synth_GluRdtase_N"/>
</dbReference>
<dbReference type="InterPro" id="IPR018214">
    <property type="entry name" value="GluRdtase_CS"/>
</dbReference>
<dbReference type="InterPro" id="IPR036453">
    <property type="entry name" value="GluRdtase_dimer_dom_sf"/>
</dbReference>
<dbReference type="InterPro" id="IPR036343">
    <property type="entry name" value="GluRdtase_N_sf"/>
</dbReference>
<dbReference type="InterPro" id="IPR036291">
    <property type="entry name" value="NAD(P)-bd_dom_sf"/>
</dbReference>
<dbReference type="InterPro" id="IPR006151">
    <property type="entry name" value="Shikm_DH/Glu-tRNA_Rdtase"/>
</dbReference>
<dbReference type="NCBIfam" id="TIGR01035">
    <property type="entry name" value="hemA"/>
    <property type="match status" value="1"/>
</dbReference>
<dbReference type="PANTHER" id="PTHR43120">
    <property type="entry name" value="GLUTAMYL-TRNA REDUCTASE 1, CHLOROPLASTIC"/>
    <property type="match status" value="1"/>
</dbReference>
<dbReference type="PANTHER" id="PTHR43120:SF1">
    <property type="entry name" value="GLUTAMYL-TRNA REDUCTASE 1, CHLOROPLASTIC"/>
    <property type="match status" value="1"/>
</dbReference>
<dbReference type="Pfam" id="PF00745">
    <property type="entry name" value="GlutR_dimer"/>
    <property type="match status" value="1"/>
</dbReference>
<dbReference type="Pfam" id="PF05201">
    <property type="entry name" value="GlutR_N"/>
    <property type="match status" value="1"/>
</dbReference>
<dbReference type="Pfam" id="PF01488">
    <property type="entry name" value="Shikimate_DH"/>
    <property type="match status" value="1"/>
</dbReference>
<dbReference type="PIRSF" id="PIRSF000445">
    <property type="entry name" value="4pyrrol_synth_GluRdtase"/>
    <property type="match status" value="1"/>
</dbReference>
<dbReference type="SUPFAM" id="SSF69742">
    <property type="entry name" value="Glutamyl tRNA-reductase catalytic, N-terminal domain"/>
    <property type="match status" value="1"/>
</dbReference>
<dbReference type="SUPFAM" id="SSF69075">
    <property type="entry name" value="Glutamyl tRNA-reductase dimerization domain"/>
    <property type="match status" value="1"/>
</dbReference>
<dbReference type="SUPFAM" id="SSF51735">
    <property type="entry name" value="NAD(P)-binding Rossmann-fold domains"/>
    <property type="match status" value="1"/>
</dbReference>
<dbReference type="PROSITE" id="PS00747">
    <property type="entry name" value="GLUTR"/>
    <property type="match status" value="1"/>
</dbReference>
<reference key="1">
    <citation type="journal article" date="1996" name="Plant J.">
        <title>Members of a low-copy number gene family encoding glutamyl-tRNA reductase are differentially expressed in barley.</title>
        <authorList>
            <person name="Bougri O."/>
            <person name="Grimm B."/>
        </authorList>
    </citation>
    <scope>NUCLEOTIDE SEQUENCE [MRNA]</scope>
    <source>
        <strain>cv. Bonus</strain>
    </source>
</reference>
<proteinExistence type="evidence at transcript level"/>
<sequence length="465" mass="51675">QFKISADRYIKEKSSIAVIGLSVHTAPVDMREKLAVAEELWPRAISELTSLNHIEEAAVLSTCNRMEIYVVALSWNRGIREVVDWMSKKSGIPASELREHLFMLRDSGATRHLFEVSAGLDSLVLGEGQILAQVKQVVRNGQNSGGLGKNIDRMFKDAITAGKRARCETNISAGAVSVSSAAVELAMMKLPKSECLSARMLLIGAGKMGKLVVKHLIAKGCKKVVVVNRSVERVDAIREEMKDIEIVYRPLTEMYEAAADADVVFTSTASESLLFTKEHAEALPPISLAMGGVRLFVDISVPRNVGACLSQVEHARVYNVDDLKEVVEANKEDRVRKAMEAQAIITQELKRFEAWRDSLETVPTIKKLRSYADRIRASELDKCLQKIGEDNLNKKTRRSIEELSTGIVNKLLHGPLQHLRCDGSDSRTLDETLDNMHALNRMFNLDTEKAVLEQKIKAKVEKTQS</sequence>
<name>HEM12_HORVU</name>
<feature type="chain" id="PRO_0000114114" description="Glutamyl-tRNA reductase 2">
    <location>
        <begin position="1" status="less than"/>
        <end position="465"/>
    </location>
</feature>
<feature type="active site" description="Nucleophile" evidence="1">
    <location>
        <position position="63"/>
    </location>
</feature>
<feature type="binding site" evidence="1">
    <location>
        <begin position="62"/>
        <end position="65"/>
    </location>
    <ligand>
        <name>substrate</name>
    </ligand>
</feature>
<feature type="binding site" evidence="1">
    <location>
        <position position="122"/>
    </location>
    <ligand>
        <name>substrate</name>
    </ligand>
</feature>
<feature type="binding site" evidence="1">
    <location>
        <begin position="127"/>
        <end position="129"/>
    </location>
    <ligand>
        <name>substrate</name>
    </ligand>
</feature>
<feature type="binding site" evidence="1">
    <location>
        <position position="133"/>
    </location>
    <ligand>
        <name>substrate</name>
    </ligand>
</feature>
<feature type="binding site" evidence="1">
    <location>
        <begin position="204"/>
        <end position="209"/>
    </location>
    <ligand>
        <name>NADP(+)</name>
        <dbReference type="ChEBI" id="CHEBI:58349"/>
    </ligand>
</feature>
<feature type="site" description="Important for activity" evidence="1">
    <location>
        <position position="112"/>
    </location>
</feature>
<feature type="non-terminal residue">
    <location>
        <position position="1"/>
    </location>
</feature>